<proteinExistence type="inferred from homology"/>
<reference key="1">
    <citation type="journal article" date="2005" name="Genome Res.">
        <title>Comparative and functional genomic analyses of the pathogenicity of phytopathogen Xanthomonas campestris pv. campestris.</title>
        <authorList>
            <person name="Qian W."/>
            <person name="Jia Y."/>
            <person name="Ren S.-X."/>
            <person name="He Y.-Q."/>
            <person name="Feng J.-X."/>
            <person name="Lu L.-F."/>
            <person name="Sun Q."/>
            <person name="Ying G."/>
            <person name="Tang D.-J."/>
            <person name="Tang H."/>
            <person name="Wu W."/>
            <person name="Hao P."/>
            <person name="Wang L."/>
            <person name="Jiang B.-L."/>
            <person name="Zeng S."/>
            <person name="Gu W.-Y."/>
            <person name="Lu G."/>
            <person name="Rong L."/>
            <person name="Tian Y."/>
            <person name="Yao Z."/>
            <person name="Fu G."/>
            <person name="Chen B."/>
            <person name="Fang R."/>
            <person name="Qiang B."/>
            <person name="Chen Z."/>
            <person name="Zhao G.-P."/>
            <person name="Tang J.-L."/>
            <person name="He C."/>
        </authorList>
    </citation>
    <scope>NUCLEOTIDE SEQUENCE [LARGE SCALE GENOMIC DNA]</scope>
    <source>
        <strain>8004</strain>
    </source>
</reference>
<sequence length="76" mass="8975">MSKFFRRRKFCKFTAEGVKEIDYKDLNTLRQYLTENGKIVPSRVTGTKSKYQRQLATAVKRSRFLALIPYTDNHDV</sequence>
<evidence type="ECO:0000255" key="1">
    <source>
        <dbReference type="HAMAP-Rule" id="MF_00270"/>
    </source>
</evidence>
<evidence type="ECO:0000305" key="2"/>
<keyword id="KW-0687">Ribonucleoprotein</keyword>
<keyword id="KW-0689">Ribosomal protein</keyword>
<keyword id="KW-0694">RNA-binding</keyword>
<keyword id="KW-0699">rRNA-binding</keyword>
<name>RS18_XANC8</name>
<accession>Q4UTA4</accession>
<comment type="function">
    <text evidence="1">Binds as a heterodimer with protein bS6 to the central domain of the 16S rRNA, where it helps stabilize the platform of the 30S subunit.</text>
</comment>
<comment type="subunit">
    <text evidence="1">Part of the 30S ribosomal subunit. Forms a tight heterodimer with protein bS6.</text>
</comment>
<comment type="similarity">
    <text evidence="1">Belongs to the bacterial ribosomal protein bS18 family.</text>
</comment>
<organism>
    <name type="scientific">Xanthomonas campestris pv. campestris (strain 8004)</name>
    <dbReference type="NCBI Taxonomy" id="314565"/>
    <lineage>
        <taxon>Bacteria</taxon>
        <taxon>Pseudomonadati</taxon>
        <taxon>Pseudomonadota</taxon>
        <taxon>Gammaproteobacteria</taxon>
        <taxon>Lysobacterales</taxon>
        <taxon>Lysobacteraceae</taxon>
        <taxon>Xanthomonas</taxon>
    </lineage>
</organism>
<gene>
    <name evidence="1" type="primary">rpsR</name>
    <name type="ordered locus">XC_2670</name>
</gene>
<dbReference type="EMBL" id="CP000050">
    <property type="protein sequence ID" value="AAY49719.1"/>
    <property type="molecule type" value="Genomic_DNA"/>
</dbReference>
<dbReference type="RefSeq" id="WP_005991243.1">
    <property type="nucleotide sequence ID" value="NZ_CP155948.1"/>
</dbReference>
<dbReference type="SMR" id="Q4UTA4"/>
<dbReference type="GeneID" id="97211160"/>
<dbReference type="KEGG" id="xcb:XC_2670"/>
<dbReference type="HOGENOM" id="CLU_148710_2_3_6"/>
<dbReference type="Proteomes" id="UP000000420">
    <property type="component" value="Chromosome"/>
</dbReference>
<dbReference type="GO" id="GO:0022627">
    <property type="term" value="C:cytosolic small ribosomal subunit"/>
    <property type="evidence" value="ECO:0007669"/>
    <property type="project" value="TreeGrafter"/>
</dbReference>
<dbReference type="GO" id="GO:0070181">
    <property type="term" value="F:small ribosomal subunit rRNA binding"/>
    <property type="evidence" value="ECO:0007669"/>
    <property type="project" value="TreeGrafter"/>
</dbReference>
<dbReference type="GO" id="GO:0003735">
    <property type="term" value="F:structural constituent of ribosome"/>
    <property type="evidence" value="ECO:0007669"/>
    <property type="project" value="InterPro"/>
</dbReference>
<dbReference type="GO" id="GO:0006412">
    <property type="term" value="P:translation"/>
    <property type="evidence" value="ECO:0007669"/>
    <property type="project" value="UniProtKB-UniRule"/>
</dbReference>
<dbReference type="FunFam" id="4.10.640.10:FF:000001">
    <property type="entry name" value="30S ribosomal protein S18"/>
    <property type="match status" value="1"/>
</dbReference>
<dbReference type="Gene3D" id="4.10.640.10">
    <property type="entry name" value="Ribosomal protein S18"/>
    <property type="match status" value="1"/>
</dbReference>
<dbReference type="HAMAP" id="MF_00270">
    <property type="entry name" value="Ribosomal_bS18"/>
    <property type="match status" value="1"/>
</dbReference>
<dbReference type="InterPro" id="IPR001648">
    <property type="entry name" value="Ribosomal_bS18"/>
</dbReference>
<dbReference type="InterPro" id="IPR018275">
    <property type="entry name" value="Ribosomal_bS18_CS"/>
</dbReference>
<dbReference type="InterPro" id="IPR036870">
    <property type="entry name" value="Ribosomal_bS18_sf"/>
</dbReference>
<dbReference type="NCBIfam" id="TIGR00165">
    <property type="entry name" value="S18"/>
    <property type="match status" value="1"/>
</dbReference>
<dbReference type="PANTHER" id="PTHR13479">
    <property type="entry name" value="30S RIBOSOMAL PROTEIN S18"/>
    <property type="match status" value="1"/>
</dbReference>
<dbReference type="PANTHER" id="PTHR13479:SF40">
    <property type="entry name" value="SMALL RIBOSOMAL SUBUNIT PROTEIN BS18M"/>
    <property type="match status" value="1"/>
</dbReference>
<dbReference type="Pfam" id="PF01084">
    <property type="entry name" value="Ribosomal_S18"/>
    <property type="match status" value="1"/>
</dbReference>
<dbReference type="PRINTS" id="PR00974">
    <property type="entry name" value="RIBOSOMALS18"/>
</dbReference>
<dbReference type="SUPFAM" id="SSF46911">
    <property type="entry name" value="Ribosomal protein S18"/>
    <property type="match status" value="1"/>
</dbReference>
<dbReference type="PROSITE" id="PS00057">
    <property type="entry name" value="RIBOSOMAL_S18"/>
    <property type="match status" value="1"/>
</dbReference>
<feature type="chain" id="PRO_1000003658" description="Small ribosomal subunit protein bS18">
    <location>
        <begin position="1"/>
        <end position="76"/>
    </location>
</feature>
<protein>
    <recommendedName>
        <fullName evidence="1">Small ribosomal subunit protein bS18</fullName>
    </recommendedName>
    <alternativeName>
        <fullName evidence="2">30S ribosomal protein S18</fullName>
    </alternativeName>
</protein>